<feature type="chain" id="PRO_0000091224" description="Elongation factor G">
    <location>
        <begin position="1"/>
        <end position="692"/>
    </location>
</feature>
<feature type="domain" description="tr-type G">
    <location>
        <begin position="8"/>
        <end position="282"/>
    </location>
</feature>
<feature type="binding site" evidence="1">
    <location>
        <begin position="17"/>
        <end position="24"/>
    </location>
    <ligand>
        <name>GTP</name>
        <dbReference type="ChEBI" id="CHEBI:37565"/>
    </ligand>
</feature>
<feature type="binding site" evidence="1">
    <location>
        <begin position="81"/>
        <end position="85"/>
    </location>
    <ligand>
        <name>GTP</name>
        <dbReference type="ChEBI" id="CHEBI:37565"/>
    </ligand>
</feature>
<feature type="binding site" evidence="1">
    <location>
        <begin position="135"/>
        <end position="138"/>
    </location>
    <ligand>
        <name>GTP</name>
        <dbReference type="ChEBI" id="CHEBI:37565"/>
    </ligand>
</feature>
<accession>Q8E3E7</accession>
<sequence length="692" mass="76599">MAREFSLEKTRNIGIMAHVDAGKTTTTERILYYTGKIHKIGETHEGASQMDWMEQEQERGITITSAATTAQWDGHRVNIIDTPGHVDFTIEVQRSLRVLDGAVTVLDAQSGVEPQTETVWRQATEYGVPRIVFANKMDKIGADFLYSVQSLHDRLQANAHPIQLPIGSEDDFRGIIDLIKMKAEIYTNDLGTDILEEDIPAEYVDQANEYREKLVEAVADTDEDLMMKYLEGEEITNEELMAAIRRATINVEFYPVLCGSAFKNKGVQLMLDAVIDYLPSPLDIPAIKGINPDTDEEETRPASDEEPFAALAFKIMTDPFVGRLTFFRVYSGVLNSGSYVLNTSKGKRERIGRILQMHANSRQEIETVYAGDIAAAVGLKDTTTGDSLTDEKSKVILESIEVPEPVIQLMVEPKSKADQDKMGIALQKLAEEDPTFRVETNVETGETVISGMGELHLDVLVDRMKREFKVEANVGAPQVSYRETFRASTQARGFFKRQSGGKGQFGDVWIEFTPNEEGKGFEFENAIVGGVVPREFIPAVEKGLVESMANGVLAGYPMVDVKAKLYDGSYHDVDSSETAFKIAASLALKEAAKSAQPAILEPMMLVTITAPEDNLGDVMGHVTARRGRVDGMEARGNTQVVRAFVPLAEMFGYATVLRSATQGRGTFMMVFDHYEDVPKSVQEEIIKKNSGE</sequence>
<keyword id="KW-0963">Cytoplasm</keyword>
<keyword id="KW-0251">Elongation factor</keyword>
<keyword id="KW-0342">GTP-binding</keyword>
<keyword id="KW-0547">Nucleotide-binding</keyword>
<keyword id="KW-0648">Protein biosynthesis</keyword>
<comment type="function">
    <text evidence="1">Catalyzes the GTP-dependent ribosomal translocation step during translation elongation. During this step, the ribosome changes from the pre-translocational (PRE) to the post-translocational (POST) state as the newly formed A-site-bound peptidyl-tRNA and P-site-bound deacylated tRNA move to the P and E sites, respectively. Catalyzes the coordinated movement of the two tRNA molecules, the mRNA and conformational changes in the ribosome.</text>
</comment>
<comment type="subcellular location">
    <subcellularLocation>
        <location evidence="1">Cytoplasm</location>
    </subcellularLocation>
</comment>
<comment type="similarity">
    <text evidence="1">Belongs to the TRAFAC class translation factor GTPase superfamily. Classic translation factor GTPase family. EF-G/EF-2 subfamily.</text>
</comment>
<dbReference type="EMBL" id="AL766853">
    <property type="protein sequence ID" value="CAD47471.1"/>
    <property type="molecule type" value="Genomic_DNA"/>
</dbReference>
<dbReference type="RefSeq" id="WP_000090325.1">
    <property type="nucleotide sequence ID" value="NC_004368.1"/>
</dbReference>
<dbReference type="SMR" id="Q8E3E7"/>
<dbReference type="KEGG" id="san:fusA"/>
<dbReference type="eggNOG" id="COG0480">
    <property type="taxonomic scope" value="Bacteria"/>
</dbReference>
<dbReference type="HOGENOM" id="CLU_002794_4_1_9"/>
<dbReference type="Proteomes" id="UP000000823">
    <property type="component" value="Chromosome"/>
</dbReference>
<dbReference type="GO" id="GO:0005737">
    <property type="term" value="C:cytoplasm"/>
    <property type="evidence" value="ECO:0007669"/>
    <property type="project" value="UniProtKB-SubCell"/>
</dbReference>
<dbReference type="GO" id="GO:0005525">
    <property type="term" value="F:GTP binding"/>
    <property type="evidence" value="ECO:0007669"/>
    <property type="project" value="UniProtKB-UniRule"/>
</dbReference>
<dbReference type="GO" id="GO:0003924">
    <property type="term" value="F:GTPase activity"/>
    <property type="evidence" value="ECO:0007669"/>
    <property type="project" value="InterPro"/>
</dbReference>
<dbReference type="GO" id="GO:0003746">
    <property type="term" value="F:translation elongation factor activity"/>
    <property type="evidence" value="ECO:0007669"/>
    <property type="project" value="UniProtKB-UniRule"/>
</dbReference>
<dbReference type="GO" id="GO:0032790">
    <property type="term" value="P:ribosome disassembly"/>
    <property type="evidence" value="ECO:0007669"/>
    <property type="project" value="TreeGrafter"/>
</dbReference>
<dbReference type="CDD" id="cd01886">
    <property type="entry name" value="EF-G"/>
    <property type="match status" value="1"/>
</dbReference>
<dbReference type="CDD" id="cd16262">
    <property type="entry name" value="EFG_III"/>
    <property type="match status" value="1"/>
</dbReference>
<dbReference type="CDD" id="cd01434">
    <property type="entry name" value="EFG_mtEFG1_IV"/>
    <property type="match status" value="1"/>
</dbReference>
<dbReference type="CDD" id="cd03713">
    <property type="entry name" value="EFG_mtEFG_C"/>
    <property type="match status" value="1"/>
</dbReference>
<dbReference type="CDD" id="cd04088">
    <property type="entry name" value="EFG_mtEFG_II"/>
    <property type="match status" value="1"/>
</dbReference>
<dbReference type="FunFam" id="2.40.30.10:FF:000006">
    <property type="entry name" value="Elongation factor G"/>
    <property type="match status" value="1"/>
</dbReference>
<dbReference type="FunFam" id="3.30.230.10:FF:000003">
    <property type="entry name" value="Elongation factor G"/>
    <property type="match status" value="1"/>
</dbReference>
<dbReference type="FunFam" id="3.30.70.240:FF:000001">
    <property type="entry name" value="Elongation factor G"/>
    <property type="match status" value="1"/>
</dbReference>
<dbReference type="FunFam" id="3.30.70.870:FF:000001">
    <property type="entry name" value="Elongation factor G"/>
    <property type="match status" value="1"/>
</dbReference>
<dbReference type="FunFam" id="3.40.50.300:FF:000029">
    <property type="entry name" value="Elongation factor G"/>
    <property type="match status" value="1"/>
</dbReference>
<dbReference type="Gene3D" id="3.30.230.10">
    <property type="match status" value="1"/>
</dbReference>
<dbReference type="Gene3D" id="3.30.70.240">
    <property type="match status" value="1"/>
</dbReference>
<dbReference type="Gene3D" id="3.30.70.870">
    <property type="entry name" value="Elongation Factor G (Translational Gtpase), domain 3"/>
    <property type="match status" value="1"/>
</dbReference>
<dbReference type="Gene3D" id="3.40.50.300">
    <property type="entry name" value="P-loop containing nucleotide triphosphate hydrolases"/>
    <property type="match status" value="1"/>
</dbReference>
<dbReference type="Gene3D" id="2.40.30.10">
    <property type="entry name" value="Translation factors"/>
    <property type="match status" value="1"/>
</dbReference>
<dbReference type="HAMAP" id="MF_00054_B">
    <property type="entry name" value="EF_G_EF_2_B"/>
    <property type="match status" value="1"/>
</dbReference>
<dbReference type="InterPro" id="IPR041095">
    <property type="entry name" value="EFG_II"/>
</dbReference>
<dbReference type="InterPro" id="IPR009022">
    <property type="entry name" value="EFG_III"/>
</dbReference>
<dbReference type="InterPro" id="IPR035647">
    <property type="entry name" value="EFG_III/V"/>
</dbReference>
<dbReference type="InterPro" id="IPR047872">
    <property type="entry name" value="EFG_IV"/>
</dbReference>
<dbReference type="InterPro" id="IPR035649">
    <property type="entry name" value="EFG_V"/>
</dbReference>
<dbReference type="InterPro" id="IPR000640">
    <property type="entry name" value="EFG_V-like"/>
</dbReference>
<dbReference type="InterPro" id="IPR004161">
    <property type="entry name" value="EFTu-like_2"/>
</dbReference>
<dbReference type="InterPro" id="IPR031157">
    <property type="entry name" value="G_TR_CS"/>
</dbReference>
<dbReference type="InterPro" id="IPR027417">
    <property type="entry name" value="P-loop_NTPase"/>
</dbReference>
<dbReference type="InterPro" id="IPR020568">
    <property type="entry name" value="Ribosomal_Su5_D2-typ_SF"/>
</dbReference>
<dbReference type="InterPro" id="IPR014721">
    <property type="entry name" value="Ribsml_uS5_D2-typ_fold_subgr"/>
</dbReference>
<dbReference type="InterPro" id="IPR005225">
    <property type="entry name" value="Small_GTP-bd"/>
</dbReference>
<dbReference type="InterPro" id="IPR000795">
    <property type="entry name" value="T_Tr_GTP-bd_dom"/>
</dbReference>
<dbReference type="InterPro" id="IPR009000">
    <property type="entry name" value="Transl_B-barrel_sf"/>
</dbReference>
<dbReference type="InterPro" id="IPR004540">
    <property type="entry name" value="Transl_elong_EFG/EF2"/>
</dbReference>
<dbReference type="InterPro" id="IPR005517">
    <property type="entry name" value="Transl_elong_EFG/EF2_IV"/>
</dbReference>
<dbReference type="NCBIfam" id="TIGR00484">
    <property type="entry name" value="EF-G"/>
    <property type="match status" value="1"/>
</dbReference>
<dbReference type="NCBIfam" id="NF009379">
    <property type="entry name" value="PRK12740.1-3"/>
    <property type="match status" value="1"/>
</dbReference>
<dbReference type="NCBIfam" id="NF009381">
    <property type="entry name" value="PRK12740.1-5"/>
    <property type="match status" value="1"/>
</dbReference>
<dbReference type="NCBIfam" id="TIGR00231">
    <property type="entry name" value="small_GTP"/>
    <property type="match status" value="1"/>
</dbReference>
<dbReference type="PANTHER" id="PTHR43261:SF1">
    <property type="entry name" value="RIBOSOME-RELEASING FACTOR 2, MITOCHONDRIAL"/>
    <property type="match status" value="1"/>
</dbReference>
<dbReference type="PANTHER" id="PTHR43261">
    <property type="entry name" value="TRANSLATION ELONGATION FACTOR G-RELATED"/>
    <property type="match status" value="1"/>
</dbReference>
<dbReference type="Pfam" id="PF00679">
    <property type="entry name" value="EFG_C"/>
    <property type="match status" value="1"/>
</dbReference>
<dbReference type="Pfam" id="PF14492">
    <property type="entry name" value="EFG_III"/>
    <property type="match status" value="1"/>
</dbReference>
<dbReference type="Pfam" id="PF03764">
    <property type="entry name" value="EFG_IV"/>
    <property type="match status" value="1"/>
</dbReference>
<dbReference type="Pfam" id="PF00009">
    <property type="entry name" value="GTP_EFTU"/>
    <property type="match status" value="1"/>
</dbReference>
<dbReference type="Pfam" id="PF03144">
    <property type="entry name" value="GTP_EFTU_D2"/>
    <property type="match status" value="1"/>
</dbReference>
<dbReference type="PRINTS" id="PR00315">
    <property type="entry name" value="ELONGATNFCT"/>
</dbReference>
<dbReference type="SMART" id="SM00838">
    <property type="entry name" value="EFG_C"/>
    <property type="match status" value="1"/>
</dbReference>
<dbReference type="SMART" id="SM00889">
    <property type="entry name" value="EFG_IV"/>
    <property type="match status" value="1"/>
</dbReference>
<dbReference type="SUPFAM" id="SSF54980">
    <property type="entry name" value="EF-G C-terminal domain-like"/>
    <property type="match status" value="2"/>
</dbReference>
<dbReference type="SUPFAM" id="SSF52540">
    <property type="entry name" value="P-loop containing nucleoside triphosphate hydrolases"/>
    <property type="match status" value="1"/>
</dbReference>
<dbReference type="SUPFAM" id="SSF54211">
    <property type="entry name" value="Ribosomal protein S5 domain 2-like"/>
    <property type="match status" value="1"/>
</dbReference>
<dbReference type="SUPFAM" id="SSF50447">
    <property type="entry name" value="Translation proteins"/>
    <property type="match status" value="1"/>
</dbReference>
<dbReference type="PROSITE" id="PS00301">
    <property type="entry name" value="G_TR_1"/>
    <property type="match status" value="1"/>
</dbReference>
<dbReference type="PROSITE" id="PS51722">
    <property type="entry name" value="G_TR_2"/>
    <property type="match status" value="1"/>
</dbReference>
<reference key="1">
    <citation type="journal article" date="2002" name="Mol. Microbiol.">
        <title>Genome sequence of Streptococcus agalactiae, a pathogen causing invasive neonatal disease.</title>
        <authorList>
            <person name="Glaser P."/>
            <person name="Rusniok C."/>
            <person name="Buchrieser C."/>
            <person name="Chevalier F."/>
            <person name="Frangeul L."/>
            <person name="Msadek T."/>
            <person name="Zouine M."/>
            <person name="Couve E."/>
            <person name="Lalioui L."/>
            <person name="Poyart C."/>
            <person name="Trieu-Cuot P."/>
            <person name="Kunst F."/>
        </authorList>
    </citation>
    <scope>NUCLEOTIDE SEQUENCE [LARGE SCALE GENOMIC DNA]</scope>
    <source>
        <strain>NEM316</strain>
    </source>
</reference>
<evidence type="ECO:0000255" key="1">
    <source>
        <dbReference type="HAMAP-Rule" id="MF_00054"/>
    </source>
</evidence>
<protein>
    <recommendedName>
        <fullName evidence="1">Elongation factor G</fullName>
        <shortName evidence="1">EF-G</shortName>
    </recommendedName>
</protein>
<gene>
    <name evidence="1" type="primary">fusA</name>
    <name type="ordered locus">gbs1812</name>
</gene>
<organism>
    <name type="scientific">Streptococcus agalactiae serotype III (strain NEM316)</name>
    <dbReference type="NCBI Taxonomy" id="211110"/>
    <lineage>
        <taxon>Bacteria</taxon>
        <taxon>Bacillati</taxon>
        <taxon>Bacillota</taxon>
        <taxon>Bacilli</taxon>
        <taxon>Lactobacillales</taxon>
        <taxon>Streptococcaceae</taxon>
        <taxon>Streptococcus</taxon>
    </lineage>
</organism>
<name>EFG_STRA3</name>
<proteinExistence type="inferred from homology"/>